<keyword id="KW-0067">ATP-binding</keyword>
<keyword id="KW-0131">Cell cycle</keyword>
<keyword id="KW-0132">Cell division</keyword>
<keyword id="KW-1003">Cell membrane</keyword>
<keyword id="KW-0159">Chromosome partition</keyword>
<keyword id="KW-0238">DNA-binding</keyword>
<keyword id="KW-0472">Membrane</keyword>
<keyword id="KW-0547">Nucleotide-binding</keyword>
<keyword id="KW-1185">Reference proteome</keyword>
<keyword id="KW-0812">Transmembrane</keyword>
<keyword id="KW-1133">Transmembrane helix</keyword>
<evidence type="ECO:0000250" key="1"/>
<evidence type="ECO:0000255" key="2"/>
<evidence type="ECO:0000255" key="3">
    <source>
        <dbReference type="PROSITE-ProRule" id="PRU00289"/>
    </source>
</evidence>
<evidence type="ECO:0000256" key="4">
    <source>
        <dbReference type="SAM" id="MobiDB-lite"/>
    </source>
</evidence>
<evidence type="ECO:0000305" key="5"/>
<reference key="1">
    <citation type="journal article" date="2003" name="Nature">
        <title>The genome sequence of Bacillus anthracis Ames and comparison to closely related bacteria.</title>
        <authorList>
            <person name="Read T.D."/>
            <person name="Peterson S.N."/>
            <person name="Tourasse N.J."/>
            <person name="Baillie L.W."/>
            <person name="Paulsen I.T."/>
            <person name="Nelson K.E."/>
            <person name="Tettelin H."/>
            <person name="Fouts D.E."/>
            <person name="Eisen J.A."/>
            <person name="Gill S.R."/>
            <person name="Holtzapple E.K."/>
            <person name="Okstad O.A."/>
            <person name="Helgason E."/>
            <person name="Rilstone J."/>
            <person name="Wu M."/>
            <person name="Kolonay J.F."/>
            <person name="Beanan M.J."/>
            <person name="Dodson R.J."/>
            <person name="Brinkac L.M."/>
            <person name="Gwinn M.L."/>
            <person name="DeBoy R.T."/>
            <person name="Madpu R."/>
            <person name="Daugherty S.C."/>
            <person name="Durkin A.S."/>
            <person name="Haft D.H."/>
            <person name="Nelson W.C."/>
            <person name="Peterson J.D."/>
            <person name="Pop M."/>
            <person name="Khouri H.M."/>
            <person name="Radune D."/>
            <person name="Benton J.L."/>
            <person name="Mahamoud Y."/>
            <person name="Jiang L."/>
            <person name="Hance I.R."/>
            <person name="Weidman J.F."/>
            <person name="Berry K.J."/>
            <person name="Plaut R.D."/>
            <person name="Wolf A.M."/>
            <person name="Watkins K.L."/>
            <person name="Nierman W.C."/>
            <person name="Hazen A."/>
            <person name="Cline R.T."/>
            <person name="Redmond C."/>
            <person name="Thwaite J.E."/>
            <person name="White O."/>
            <person name="Salzberg S.L."/>
            <person name="Thomason B."/>
            <person name="Friedlander A.M."/>
            <person name="Koehler T.M."/>
            <person name="Hanna P.C."/>
            <person name="Kolstoe A.-B."/>
            <person name="Fraser C.M."/>
        </authorList>
    </citation>
    <scope>NUCLEOTIDE SEQUENCE [LARGE SCALE GENOMIC DNA]</scope>
    <source>
        <strain>Ames / isolate Porton</strain>
    </source>
</reference>
<reference key="2">
    <citation type="journal article" date="2009" name="J. Bacteriol.">
        <title>The complete genome sequence of Bacillus anthracis Ames 'Ancestor'.</title>
        <authorList>
            <person name="Ravel J."/>
            <person name="Jiang L."/>
            <person name="Stanley S.T."/>
            <person name="Wilson M.R."/>
            <person name="Decker R.S."/>
            <person name="Read T.D."/>
            <person name="Worsham P."/>
            <person name="Keim P.S."/>
            <person name="Salzberg S.L."/>
            <person name="Fraser-Liggett C.M."/>
            <person name="Rasko D.A."/>
        </authorList>
    </citation>
    <scope>NUCLEOTIDE SEQUENCE [LARGE SCALE GENOMIC DNA]</scope>
    <source>
        <strain>Ames ancestor</strain>
    </source>
</reference>
<reference key="3">
    <citation type="submission" date="2004-01" db="EMBL/GenBank/DDBJ databases">
        <title>Complete genome sequence of Bacillus anthracis Sterne.</title>
        <authorList>
            <person name="Brettin T.S."/>
            <person name="Bruce D."/>
            <person name="Challacombe J.F."/>
            <person name="Gilna P."/>
            <person name="Han C."/>
            <person name="Hill K."/>
            <person name="Hitchcock P."/>
            <person name="Jackson P."/>
            <person name="Keim P."/>
            <person name="Longmire J."/>
            <person name="Lucas S."/>
            <person name="Okinaka R."/>
            <person name="Richardson P."/>
            <person name="Rubin E."/>
            <person name="Tice H."/>
        </authorList>
    </citation>
    <scope>NUCLEOTIDE SEQUENCE [LARGE SCALE GENOMIC DNA]</scope>
    <source>
        <strain>Sterne</strain>
    </source>
</reference>
<feature type="chain" id="PRO_0000098236" description="DNA translocase FtsK">
    <location>
        <begin position="1"/>
        <end position="793"/>
    </location>
</feature>
<feature type="transmembrane region" description="Helical" evidence="2">
    <location>
        <begin position="25"/>
        <end position="45"/>
    </location>
</feature>
<feature type="transmembrane region" description="Helical" evidence="2">
    <location>
        <begin position="56"/>
        <end position="76"/>
    </location>
</feature>
<feature type="transmembrane region" description="Helical" evidence="2">
    <location>
        <begin position="88"/>
        <end position="108"/>
    </location>
</feature>
<feature type="transmembrane region" description="Helical" evidence="2">
    <location>
        <begin position="136"/>
        <end position="156"/>
    </location>
</feature>
<feature type="transmembrane region" description="Helical" evidence="2">
    <location>
        <begin position="157"/>
        <end position="177"/>
    </location>
</feature>
<feature type="topological domain" description="Cytoplasmic" evidence="2">
    <location>
        <begin position="178"/>
        <end position="793"/>
    </location>
</feature>
<feature type="domain" description="FtsK" evidence="3">
    <location>
        <begin position="458"/>
        <end position="654"/>
    </location>
</feature>
<feature type="region of interest" description="Disordered" evidence="4">
    <location>
        <begin position="212"/>
        <end position="235"/>
    </location>
</feature>
<feature type="compositionally biased region" description="Basic and acidic residues" evidence="4">
    <location>
        <begin position="212"/>
        <end position="221"/>
    </location>
</feature>
<feature type="binding site" evidence="3">
    <location>
        <begin position="478"/>
        <end position="483"/>
    </location>
    <ligand>
        <name>ATP</name>
        <dbReference type="ChEBI" id="CHEBI:30616"/>
    </ligand>
</feature>
<dbReference type="EMBL" id="AE016879">
    <property type="protein sequence ID" value="AAP27660.1"/>
    <property type="molecule type" value="Genomic_DNA"/>
</dbReference>
<dbReference type="EMBL" id="AE017334">
    <property type="protein sequence ID" value="AAT33046.1"/>
    <property type="molecule type" value="Genomic_DNA"/>
</dbReference>
<dbReference type="EMBL" id="AE017225">
    <property type="protein sequence ID" value="AAT55947.1"/>
    <property type="molecule type" value="Genomic_DNA"/>
</dbReference>
<dbReference type="RefSeq" id="NP_846174.1">
    <property type="nucleotide sequence ID" value="NC_003997.3"/>
</dbReference>
<dbReference type="RefSeq" id="WP_001118785.1">
    <property type="nucleotide sequence ID" value="NZ_WXXJ01000027.1"/>
</dbReference>
<dbReference type="RefSeq" id="YP_029896.1">
    <property type="nucleotide sequence ID" value="NC_005945.1"/>
</dbReference>
<dbReference type="SMR" id="Q81WP2"/>
<dbReference type="STRING" id="261594.GBAA_3930"/>
<dbReference type="DNASU" id="1086911"/>
<dbReference type="GeneID" id="45023623"/>
<dbReference type="KEGG" id="ban:BA_3930"/>
<dbReference type="KEGG" id="banh:HYU01_19210"/>
<dbReference type="KEGG" id="bar:GBAA_3930"/>
<dbReference type="KEGG" id="bat:BAS3645"/>
<dbReference type="PATRIC" id="fig|198094.11.peg.3901"/>
<dbReference type="eggNOG" id="COG1674">
    <property type="taxonomic scope" value="Bacteria"/>
</dbReference>
<dbReference type="HOGENOM" id="CLU_001981_9_6_9"/>
<dbReference type="OMA" id="FGEWYML"/>
<dbReference type="OrthoDB" id="9807790at2"/>
<dbReference type="Proteomes" id="UP000000427">
    <property type="component" value="Chromosome"/>
</dbReference>
<dbReference type="Proteomes" id="UP000000594">
    <property type="component" value="Chromosome"/>
</dbReference>
<dbReference type="GO" id="GO:0005886">
    <property type="term" value="C:plasma membrane"/>
    <property type="evidence" value="ECO:0007669"/>
    <property type="project" value="UniProtKB-SubCell"/>
</dbReference>
<dbReference type="GO" id="GO:0005524">
    <property type="term" value="F:ATP binding"/>
    <property type="evidence" value="ECO:0007669"/>
    <property type="project" value="UniProtKB-KW"/>
</dbReference>
<dbReference type="GO" id="GO:0016887">
    <property type="term" value="F:ATP hydrolysis activity"/>
    <property type="evidence" value="ECO:0007669"/>
    <property type="project" value="InterPro"/>
</dbReference>
<dbReference type="GO" id="GO:0003677">
    <property type="term" value="F:DNA binding"/>
    <property type="evidence" value="ECO:0007669"/>
    <property type="project" value="UniProtKB-KW"/>
</dbReference>
<dbReference type="GO" id="GO:0051301">
    <property type="term" value="P:cell division"/>
    <property type="evidence" value="ECO:0007669"/>
    <property type="project" value="UniProtKB-KW"/>
</dbReference>
<dbReference type="GO" id="GO:0007059">
    <property type="term" value="P:chromosome segregation"/>
    <property type="evidence" value="ECO:0007669"/>
    <property type="project" value="UniProtKB-KW"/>
</dbReference>
<dbReference type="CDD" id="cd01127">
    <property type="entry name" value="TrwB_TraG_TraD_VirD4"/>
    <property type="match status" value="1"/>
</dbReference>
<dbReference type="FunFam" id="3.30.980.40:FF:000001">
    <property type="entry name" value="DNA translocase FtsK"/>
    <property type="match status" value="1"/>
</dbReference>
<dbReference type="Gene3D" id="3.30.980.40">
    <property type="match status" value="1"/>
</dbReference>
<dbReference type="Gene3D" id="3.40.50.300">
    <property type="entry name" value="P-loop containing nucleotide triphosphate hydrolases"/>
    <property type="match status" value="1"/>
</dbReference>
<dbReference type="Gene3D" id="1.10.10.10">
    <property type="entry name" value="Winged helix-like DNA-binding domain superfamily/Winged helix DNA-binding domain"/>
    <property type="match status" value="1"/>
</dbReference>
<dbReference type="InterPro" id="IPR003593">
    <property type="entry name" value="AAA+_ATPase"/>
</dbReference>
<dbReference type="InterPro" id="IPR050206">
    <property type="entry name" value="FtsK/SpoIIIE/SftA"/>
</dbReference>
<dbReference type="InterPro" id="IPR041027">
    <property type="entry name" value="FtsK_alpha"/>
</dbReference>
<dbReference type="InterPro" id="IPR002543">
    <property type="entry name" value="FtsK_dom"/>
</dbReference>
<dbReference type="InterPro" id="IPR018541">
    <property type="entry name" value="Ftsk_gamma"/>
</dbReference>
<dbReference type="InterPro" id="IPR027417">
    <property type="entry name" value="P-loop_NTPase"/>
</dbReference>
<dbReference type="InterPro" id="IPR036388">
    <property type="entry name" value="WH-like_DNA-bd_sf"/>
</dbReference>
<dbReference type="InterPro" id="IPR036390">
    <property type="entry name" value="WH_DNA-bd_sf"/>
</dbReference>
<dbReference type="PANTHER" id="PTHR22683:SF41">
    <property type="entry name" value="DNA TRANSLOCASE FTSK"/>
    <property type="match status" value="1"/>
</dbReference>
<dbReference type="PANTHER" id="PTHR22683">
    <property type="entry name" value="SPORULATION PROTEIN RELATED"/>
    <property type="match status" value="1"/>
</dbReference>
<dbReference type="Pfam" id="PF17854">
    <property type="entry name" value="FtsK_alpha"/>
    <property type="match status" value="1"/>
</dbReference>
<dbReference type="Pfam" id="PF09397">
    <property type="entry name" value="FtsK_gamma"/>
    <property type="match status" value="1"/>
</dbReference>
<dbReference type="Pfam" id="PF01580">
    <property type="entry name" value="FtsK_SpoIIIE"/>
    <property type="match status" value="1"/>
</dbReference>
<dbReference type="SMART" id="SM00382">
    <property type="entry name" value="AAA"/>
    <property type="match status" value="1"/>
</dbReference>
<dbReference type="SMART" id="SM00843">
    <property type="entry name" value="Ftsk_gamma"/>
    <property type="match status" value="1"/>
</dbReference>
<dbReference type="SUPFAM" id="SSF52540">
    <property type="entry name" value="P-loop containing nucleoside triphosphate hydrolases"/>
    <property type="match status" value="1"/>
</dbReference>
<dbReference type="SUPFAM" id="SSF46785">
    <property type="entry name" value="Winged helix' DNA-binding domain"/>
    <property type="match status" value="1"/>
</dbReference>
<dbReference type="PROSITE" id="PS50901">
    <property type="entry name" value="FTSK"/>
    <property type="match status" value="1"/>
</dbReference>
<name>FTSK_BACAN</name>
<protein>
    <recommendedName>
        <fullName>DNA translocase FtsK</fullName>
    </recommendedName>
</protein>
<accession>Q81WP2</accession>
<accession>Q6HUU2</accession>
<accession>Q6KP22</accession>
<sequence length="793" mass="88356">MAKQKQRGTKAKARRTIKPTLYYEIVGLTLFALSIITILQLGVVGKSFVLFFRFFFGEWYIIGVLGVIALSVSFVIKRGWPNLLNKRLIGFYLIVLAILMFSHITLFNLLTKDGAVQNTSVIVSTKDNFFLEMKKGPDSVHLGGGMFGALMFATCYFLFDEVGAYIIGIILVILGILCITNKHIGEVLAPVGRILRSQFQVMQGDYKDWRAKRTAEQTEKKKTTRSTRSKRATEQEEIIEPMEEISIDPPIISNFTENYPVNEQEDKRIEVEQEELITSPFIEEAPPVEEPKKKRGEKIVESLEGETQAPPMQFSNVENKDYKLPALDILKFPKNKQVTNENAEIYENARKLERTFQSFGVKAKVTKVHRGPAVTKYEVYPDMGVKVSKIVGLSDDLALALAAKDIRIEAPIPGKSAVGIEVPNSEVSMVTLREVLDSKANNHPEEKLLIGLGRDITGEAVLARLNKMPHLLVAGATGSGKSVCINGIIVSILMRAKPHEVKLMMIDPKMVELNVYNGVPHLLTPVVTDPKKASQALKKVVSEMERRYELFAHSGTRNIEGYNDYIKEHNNQSEAKQPELPYIVVIVDELADLMMVASSDVEDAIMRLAQMARAAGIHLIIATQRPSVDVITGVIKANIPSRIAFAVSSQTDSRTILDGGGAEKLLGRGDMLFIPIGASKPVRVQGAFLSDDEVERVVEYVIGQQKAQYQEDMIPQDVPDTKQEVEDELYDEAVQLVVEMQTASVSMLQRRFRVGYTRAARLIDAMEMNGVVGPYEGSKPREVLINDVQEKSS</sequence>
<organism>
    <name type="scientific">Bacillus anthracis</name>
    <dbReference type="NCBI Taxonomy" id="1392"/>
    <lineage>
        <taxon>Bacteria</taxon>
        <taxon>Bacillati</taxon>
        <taxon>Bacillota</taxon>
        <taxon>Bacilli</taxon>
        <taxon>Bacillales</taxon>
        <taxon>Bacillaceae</taxon>
        <taxon>Bacillus</taxon>
        <taxon>Bacillus cereus group</taxon>
    </lineage>
</organism>
<gene>
    <name type="primary">ftsK</name>
    <name type="ordered locus">BA_3930</name>
    <name type="ordered locus">GBAA_3930</name>
    <name type="ordered locus">BAS3645</name>
</gene>
<comment type="function">
    <text evidence="1">Essential cell division protein that coordinates cell division and chromosome segregation. The N-terminus is involved in assembly of the cell-division machinery. The C-terminus functions as a DNA motor that moves dsDNA in an ATP-dependent manner towards the dif recombination site, which is located within the replication terminus region. Required for activation of the Xer recombinase, allowing activation of chromosome unlinking by recombination (By similarity).</text>
</comment>
<comment type="subunit">
    <text evidence="1">Homohexamer. Forms a ring that surrounds DNA (By similarity).</text>
</comment>
<comment type="subcellular location">
    <subcellularLocation>
        <location evidence="1">Cell membrane</location>
        <topology evidence="1">Multi-pass membrane protein</topology>
    </subcellularLocation>
    <text evidence="1">Located at the septum.</text>
</comment>
<comment type="domain">
    <text evidence="1">Consists of an N-terminal domain, which is sufficient for the localization to the septal ring and is required for cell division, followed by a linker domain, and a C-terminal domain, which forms the translocation motor involved in chromosome segregation. The C-terminal domain can be further subdivided into alpha, beta and gamma subdomains. The alpha and beta subdomains form the DNA pump, and the gamma subdomain is a regulatory subdomain (By similarity).</text>
</comment>
<comment type="similarity">
    <text evidence="5">Belongs to the FtsK/SpoIIIE/SftA family.</text>
</comment>
<proteinExistence type="inferred from homology"/>